<comment type="function">
    <text>May be involved in the biosynthesis of a heptaene-type antibiotic.</text>
</comment>
<comment type="similarity">
    <text evidence="3">Belongs to the short-chain dehydrogenases/reductases (SDR) family.</text>
</comment>
<organism>
    <name type="scientific">Streptomyces coelicolor</name>
    <dbReference type="NCBI Taxonomy" id="1902"/>
    <lineage>
        <taxon>Bacteria</taxon>
        <taxon>Bacillati</taxon>
        <taxon>Actinomycetota</taxon>
        <taxon>Actinomycetes</taxon>
        <taxon>Kitasatosporales</taxon>
        <taxon>Streptomycetaceae</taxon>
        <taxon>Streptomyces</taxon>
        <taxon>Streptomyces albidoflavus group</taxon>
    </lineage>
</organism>
<evidence type="ECO:0000250" key="1"/>
<evidence type="ECO:0000255" key="2">
    <source>
        <dbReference type="PROSITE-ProRule" id="PRU10001"/>
    </source>
</evidence>
<evidence type="ECO:0000305" key="3"/>
<accession>P43168</accession>
<keyword id="KW-0045">Antibiotic biosynthesis</keyword>
<keyword id="KW-0560">Oxidoreductase</keyword>
<sequence>MPKDASGPPRSLLVLGGTSAIGLATARRLIARGARLVHLAARPSPALEKAAGELTALGAEVRTVPFDALDPESHQASLGPVFAAGDVDLVLLRFGIAGDQARDESRPLDAVRVAQTNYTGAVGAGLLCGAALQEQGHGTLVVLSSAAGVRARRADFIYGSSKAGLDAFAQGLGDALYGTGVRVMVVRPGTVLDPGTPRGDARLTTTPGQVAAAIELGLRRGSETVWVPGGLRLVMSAVRGLPRPLFRRLVV</sequence>
<reference key="1">
    <citation type="journal article" date="1992" name="Mol. Microbiol.">
        <title>A metalloprotease gene from Streptomyces coelicolor 'Muller' and its transcriptional activator, a member of the LysR family.</title>
        <authorList>
            <person name="Dammann T."/>
            <person name="Wohlleben W."/>
        </authorList>
    </citation>
    <scope>NUCLEOTIDE SEQUENCE [GENOMIC DNA]</scope>
    <source>
        <strain>DSM 3030 / Mueller</strain>
    </source>
</reference>
<feature type="chain" id="PRO_0000054890" description="Uncharacterized oxidoreductase in mprA 5'region">
    <location>
        <begin position="1"/>
        <end position="251"/>
    </location>
</feature>
<feature type="active site" description="Proton acceptor" evidence="2">
    <location>
        <position position="158"/>
    </location>
</feature>
<feature type="binding site" evidence="1">
    <location>
        <begin position="14"/>
        <end position="37"/>
    </location>
    <ligand>
        <name>NADP(+)</name>
        <dbReference type="ChEBI" id="CHEBI:58349"/>
    </ligand>
</feature>
<feature type="binding site" evidence="1">
    <location>
        <position position="145"/>
    </location>
    <ligand>
        <name>substrate</name>
    </ligand>
</feature>
<proteinExistence type="inferred from homology"/>
<protein>
    <recommendedName>
        <fullName>Uncharacterized oxidoreductase in mprA 5'region</fullName>
        <ecNumber>1.-.-.-</ecNumber>
    </recommendedName>
    <alternativeName>
        <fullName>ORF3</fullName>
    </alternativeName>
</protein>
<name>YMP3_STRCH</name>
<dbReference type="EC" id="1.-.-.-"/>
<dbReference type="EMBL" id="Z11929">
    <property type="protein sequence ID" value="CAA77984.1"/>
    <property type="molecule type" value="Genomic_DNA"/>
</dbReference>
<dbReference type="PIR" id="S25186">
    <property type="entry name" value="S25186"/>
</dbReference>
<dbReference type="SMR" id="P43168"/>
<dbReference type="GO" id="GO:0016491">
    <property type="term" value="F:oxidoreductase activity"/>
    <property type="evidence" value="ECO:0007669"/>
    <property type="project" value="UniProtKB-KW"/>
</dbReference>
<dbReference type="GO" id="GO:0017000">
    <property type="term" value="P:antibiotic biosynthetic process"/>
    <property type="evidence" value="ECO:0007669"/>
    <property type="project" value="UniProtKB-KW"/>
</dbReference>
<dbReference type="Gene3D" id="3.40.50.720">
    <property type="entry name" value="NAD(P)-binding Rossmann-like Domain"/>
    <property type="match status" value="1"/>
</dbReference>
<dbReference type="InterPro" id="IPR036291">
    <property type="entry name" value="NAD(P)-bd_dom_sf"/>
</dbReference>
<dbReference type="InterPro" id="IPR020904">
    <property type="entry name" value="Sc_DH/Rdtase_CS"/>
</dbReference>
<dbReference type="InterPro" id="IPR002347">
    <property type="entry name" value="SDR_fam"/>
</dbReference>
<dbReference type="PANTHER" id="PTHR43669">
    <property type="entry name" value="5-KETO-D-GLUCONATE 5-REDUCTASE"/>
    <property type="match status" value="1"/>
</dbReference>
<dbReference type="PANTHER" id="PTHR43669:SF6">
    <property type="entry name" value="DECAPRENYLPHOSPHORYL-2-KETO-BETA-D-ERYTHRO-PENTOSE REDUCTASE"/>
    <property type="match status" value="1"/>
</dbReference>
<dbReference type="Pfam" id="PF00106">
    <property type="entry name" value="adh_short"/>
    <property type="match status" value="1"/>
</dbReference>
<dbReference type="PRINTS" id="PR00081">
    <property type="entry name" value="GDHRDH"/>
</dbReference>
<dbReference type="SUPFAM" id="SSF51735">
    <property type="entry name" value="NAD(P)-binding Rossmann-fold domains"/>
    <property type="match status" value="1"/>
</dbReference>
<dbReference type="PROSITE" id="PS00061">
    <property type="entry name" value="ADH_SHORT"/>
    <property type="match status" value="1"/>
</dbReference>